<keyword id="KW-1185">Reference proteome</keyword>
<keyword id="KW-0687">Ribonucleoprotein</keyword>
<keyword id="KW-0689">Ribosomal protein</keyword>
<keyword id="KW-0694">RNA-binding</keyword>
<keyword id="KW-0699">rRNA-binding</keyword>
<dbReference type="EMBL" id="CP000097">
    <property type="protein sequence ID" value="ABB26918.1"/>
    <property type="molecule type" value="Genomic_DNA"/>
</dbReference>
<dbReference type="RefSeq" id="WP_011360717.1">
    <property type="nucleotide sequence ID" value="NC_007513.1"/>
</dbReference>
<dbReference type="SMR" id="Q3AUW7"/>
<dbReference type="STRING" id="316279.Syncc9902_1960"/>
<dbReference type="KEGG" id="sye:Syncc9902_1960"/>
<dbReference type="eggNOG" id="COG0091">
    <property type="taxonomic scope" value="Bacteria"/>
</dbReference>
<dbReference type="HOGENOM" id="CLU_083987_3_2_3"/>
<dbReference type="OrthoDB" id="9805969at2"/>
<dbReference type="Proteomes" id="UP000002712">
    <property type="component" value="Chromosome"/>
</dbReference>
<dbReference type="GO" id="GO:0022625">
    <property type="term" value="C:cytosolic large ribosomal subunit"/>
    <property type="evidence" value="ECO:0007669"/>
    <property type="project" value="TreeGrafter"/>
</dbReference>
<dbReference type="GO" id="GO:0019843">
    <property type="term" value="F:rRNA binding"/>
    <property type="evidence" value="ECO:0007669"/>
    <property type="project" value="UniProtKB-UniRule"/>
</dbReference>
<dbReference type="GO" id="GO:0003735">
    <property type="term" value="F:structural constituent of ribosome"/>
    <property type="evidence" value="ECO:0007669"/>
    <property type="project" value="InterPro"/>
</dbReference>
<dbReference type="GO" id="GO:0006412">
    <property type="term" value="P:translation"/>
    <property type="evidence" value="ECO:0007669"/>
    <property type="project" value="UniProtKB-UniRule"/>
</dbReference>
<dbReference type="CDD" id="cd00336">
    <property type="entry name" value="Ribosomal_L22"/>
    <property type="match status" value="1"/>
</dbReference>
<dbReference type="Gene3D" id="3.90.470.10">
    <property type="entry name" value="Ribosomal protein L22/L17"/>
    <property type="match status" value="1"/>
</dbReference>
<dbReference type="HAMAP" id="MF_01331_B">
    <property type="entry name" value="Ribosomal_uL22_B"/>
    <property type="match status" value="1"/>
</dbReference>
<dbReference type="InterPro" id="IPR001063">
    <property type="entry name" value="Ribosomal_uL22"/>
</dbReference>
<dbReference type="InterPro" id="IPR005727">
    <property type="entry name" value="Ribosomal_uL22_bac/chlpt-type"/>
</dbReference>
<dbReference type="InterPro" id="IPR047867">
    <property type="entry name" value="Ribosomal_uL22_bac/org-type"/>
</dbReference>
<dbReference type="InterPro" id="IPR018260">
    <property type="entry name" value="Ribosomal_uL22_CS"/>
</dbReference>
<dbReference type="InterPro" id="IPR036394">
    <property type="entry name" value="Ribosomal_uL22_sf"/>
</dbReference>
<dbReference type="NCBIfam" id="TIGR01044">
    <property type="entry name" value="rplV_bact"/>
    <property type="match status" value="1"/>
</dbReference>
<dbReference type="PANTHER" id="PTHR13501">
    <property type="entry name" value="CHLOROPLAST 50S RIBOSOMAL PROTEIN L22-RELATED"/>
    <property type="match status" value="1"/>
</dbReference>
<dbReference type="PANTHER" id="PTHR13501:SF8">
    <property type="entry name" value="LARGE RIBOSOMAL SUBUNIT PROTEIN UL22M"/>
    <property type="match status" value="1"/>
</dbReference>
<dbReference type="Pfam" id="PF00237">
    <property type="entry name" value="Ribosomal_L22"/>
    <property type="match status" value="1"/>
</dbReference>
<dbReference type="SUPFAM" id="SSF54843">
    <property type="entry name" value="Ribosomal protein L22"/>
    <property type="match status" value="1"/>
</dbReference>
<dbReference type="PROSITE" id="PS00464">
    <property type="entry name" value="RIBOSOMAL_L22"/>
    <property type="match status" value="1"/>
</dbReference>
<feature type="chain" id="PRO_0000243217" description="Large ribosomal subunit protein uL22">
    <location>
        <begin position="1"/>
        <end position="121"/>
    </location>
</feature>
<accession>Q3AUW7</accession>
<evidence type="ECO:0000255" key="1">
    <source>
        <dbReference type="HAMAP-Rule" id="MF_01331"/>
    </source>
</evidence>
<evidence type="ECO:0000305" key="2"/>
<gene>
    <name evidence="1" type="primary">rplV</name>
    <name evidence="1" type="synonym">rpl22</name>
    <name type="ordered locus">Syncc9902_1960</name>
</gene>
<organism>
    <name type="scientific">Synechococcus sp. (strain CC9902)</name>
    <dbReference type="NCBI Taxonomy" id="316279"/>
    <lineage>
        <taxon>Bacteria</taxon>
        <taxon>Bacillati</taxon>
        <taxon>Cyanobacteriota</taxon>
        <taxon>Cyanophyceae</taxon>
        <taxon>Synechococcales</taxon>
        <taxon>Synechococcaceae</taxon>
        <taxon>Synechococcus</taxon>
    </lineage>
</organism>
<reference key="1">
    <citation type="submission" date="2005-08" db="EMBL/GenBank/DDBJ databases">
        <title>Complete sequence of Synechococcus sp. CC9902.</title>
        <authorList>
            <person name="Copeland A."/>
            <person name="Lucas S."/>
            <person name="Lapidus A."/>
            <person name="Barry K."/>
            <person name="Detter J.C."/>
            <person name="Glavina T."/>
            <person name="Hammon N."/>
            <person name="Israni S."/>
            <person name="Pitluck S."/>
            <person name="Martinez M."/>
            <person name="Schmutz J."/>
            <person name="Larimer F."/>
            <person name="Land M."/>
            <person name="Kyrpides N."/>
            <person name="Ivanova N."/>
            <person name="Richardson P."/>
        </authorList>
    </citation>
    <scope>NUCLEOTIDE SEQUENCE [LARGE SCALE GENOMIC DNA]</scope>
    <source>
        <strain>CC9902</strain>
    </source>
</reference>
<sequence length="121" mass="13169">MTSSTSTAATAQAHGRFIRGSVSKVRRVLDQIRGRTYRDALIMLEFMPYRSTGPITKVLRSAVANAENNLGLDPASLVISSASADMGPSMKRYRPRAQGRAFQIKKQTCHISIAVAVQTDS</sequence>
<proteinExistence type="inferred from homology"/>
<comment type="function">
    <text evidence="1">This protein binds specifically to 23S rRNA; its binding is stimulated by other ribosomal proteins, e.g. L4, L17, and L20. It is important during the early stages of 50S assembly. It makes multiple contacts with different domains of the 23S rRNA in the assembled 50S subunit and ribosome (By similarity).</text>
</comment>
<comment type="function">
    <text evidence="1">The globular domain of the protein is located near the polypeptide exit tunnel on the outside of the subunit, while an extended beta-hairpin is found that lines the wall of the exit tunnel in the center of the 70S ribosome.</text>
</comment>
<comment type="subunit">
    <text evidence="1">Part of the 50S ribosomal subunit.</text>
</comment>
<comment type="similarity">
    <text evidence="1">Belongs to the universal ribosomal protein uL22 family.</text>
</comment>
<protein>
    <recommendedName>
        <fullName evidence="1">Large ribosomal subunit protein uL22</fullName>
    </recommendedName>
    <alternativeName>
        <fullName evidence="2">50S ribosomal protein L22</fullName>
    </alternativeName>
</protein>
<name>RL22_SYNS9</name>